<organism>
    <name type="scientific">Penicillium rubens (strain ATCC 28089 / DSM 1075 / NRRL 1951 / Wisconsin 54-1255)</name>
    <name type="common">Penicillium chrysogenum</name>
    <dbReference type="NCBI Taxonomy" id="500485"/>
    <lineage>
        <taxon>Eukaryota</taxon>
        <taxon>Fungi</taxon>
        <taxon>Dikarya</taxon>
        <taxon>Ascomycota</taxon>
        <taxon>Pezizomycotina</taxon>
        <taxon>Eurotiomycetes</taxon>
        <taxon>Eurotiomycetidae</taxon>
        <taxon>Eurotiales</taxon>
        <taxon>Aspergillaceae</taxon>
        <taxon>Penicillium</taxon>
        <taxon>Penicillium chrysogenum species complex</taxon>
    </lineage>
</organism>
<keyword id="KW-0012">Acyltransferase</keyword>
<keyword id="KW-0576">Peroxisome</keyword>
<keyword id="KW-1185">Reference proteome</keyword>
<keyword id="KW-0808">Transferase</keyword>
<gene>
    <name evidence="18" type="primary">aatA</name>
    <name type="ORF">PCH_Pc21g21370</name>
</gene>
<name>AATA_PENRW</name>
<proteinExistence type="evidence at protein level"/>
<feature type="chain" id="PRO_0000455269" description="Isopenicillin-N N-acyltransferase">
    <location>
        <begin position="1"/>
        <end position="357"/>
    </location>
</feature>
<feature type="chain" id="PRO_0000455270" description="Acyl-coenzyme A:6-aminopenicillanic acid acyltransferase 11 kDa subunit">
    <location>
        <begin position="1"/>
        <end position="102"/>
    </location>
</feature>
<feature type="chain" id="PRO_0000455271" description="Acyl-coenzyme A:6-aminopenicillanic acid acyltransferase 29 kDa subunit">
    <location>
        <begin position="103"/>
        <end position="357"/>
    </location>
</feature>
<feature type="binding site" evidence="7">
    <location>
        <position position="121"/>
    </location>
    <ligand>
        <name>6-aminopenicillanate</name>
        <dbReference type="ChEBI" id="CHEBI:57869"/>
    </ligand>
</feature>
<feature type="binding site" evidence="7">
    <location>
        <position position="310"/>
    </location>
    <ligand>
        <name>6-aminopenicillanate</name>
        <dbReference type="ChEBI" id="CHEBI:57869"/>
    </ligand>
</feature>
<dbReference type="EC" id="2.3.1.164" evidence="2 8 9"/>
<dbReference type="EMBL" id="AM920436">
    <property type="protein sequence ID" value="CAP97034.1"/>
    <property type="molecule type" value="Genomic_DNA"/>
</dbReference>
<dbReference type="RefSeq" id="XP_002569112.1">
    <property type="nucleotide sequence ID" value="XM_002569066.1"/>
</dbReference>
<dbReference type="SMR" id="B6HLT9"/>
<dbReference type="STRING" id="500485.B6HLT9"/>
<dbReference type="MEROPS" id="C45.001"/>
<dbReference type="KEGG" id="pcs:N7525_006406"/>
<dbReference type="VEuPathDB" id="FungiDB:PCH_Pc21g21370"/>
<dbReference type="eggNOG" id="ENOG502RY9N">
    <property type="taxonomic scope" value="Eukaryota"/>
</dbReference>
<dbReference type="HOGENOM" id="CLU_037787_1_0_1"/>
<dbReference type="OMA" id="NWDFFSA"/>
<dbReference type="OrthoDB" id="189997at2759"/>
<dbReference type="UniPathway" id="UPA00149">
    <property type="reaction ID" value="UER00241"/>
</dbReference>
<dbReference type="Proteomes" id="UP000000724">
    <property type="component" value="Contig Pc00c21"/>
</dbReference>
<dbReference type="GO" id="GO:0005782">
    <property type="term" value="C:peroxisomal matrix"/>
    <property type="evidence" value="ECO:0007669"/>
    <property type="project" value="UniProtKB-SubCell"/>
</dbReference>
<dbReference type="GO" id="GO:0016746">
    <property type="term" value="F:acyltransferase activity"/>
    <property type="evidence" value="ECO:0007669"/>
    <property type="project" value="UniProtKB-KW"/>
</dbReference>
<dbReference type="GO" id="GO:0042318">
    <property type="term" value="P:penicillin biosynthetic process"/>
    <property type="evidence" value="ECO:0000314"/>
    <property type="project" value="GO_Central"/>
</dbReference>
<dbReference type="FunFam" id="1.10.10.2120:FF:000002">
    <property type="entry name" value="Acyl-coenzyme A:6-aminopenicillanic-acid-acyltransferase 40 kDa form"/>
    <property type="match status" value="1"/>
</dbReference>
<dbReference type="FunFam" id="3.60.60.10:FF:000010">
    <property type="entry name" value="Acyl-coenzyme A:6-aminopenicillanic-acid-acyltransferase 40 kDa form"/>
    <property type="match status" value="1"/>
</dbReference>
<dbReference type="Gene3D" id="1.10.10.2120">
    <property type="match status" value="1"/>
</dbReference>
<dbReference type="Gene3D" id="3.60.60.10">
    <property type="entry name" value="Penicillin V Acylase, Chain A"/>
    <property type="match status" value="1"/>
</dbReference>
<dbReference type="InterPro" id="IPR047794">
    <property type="entry name" value="C45_proenzyme-like"/>
</dbReference>
<dbReference type="InterPro" id="IPR047801">
    <property type="entry name" value="Peptidase_C45"/>
</dbReference>
<dbReference type="InterPro" id="IPR005079">
    <property type="entry name" value="Peptidase_C45_hydrolase"/>
</dbReference>
<dbReference type="NCBIfam" id="NF040521">
    <property type="entry name" value="C45_proenzyme"/>
    <property type="match status" value="1"/>
</dbReference>
<dbReference type="PANTHER" id="PTHR34180:SF1">
    <property type="entry name" value="BETA-ALANYL-DOPAMINE_CARCININE HYDROLASE"/>
    <property type="match status" value="1"/>
</dbReference>
<dbReference type="PANTHER" id="PTHR34180">
    <property type="entry name" value="PEPTIDASE C45"/>
    <property type="match status" value="1"/>
</dbReference>
<dbReference type="Pfam" id="PF03417">
    <property type="entry name" value="AAT"/>
    <property type="match status" value="1"/>
</dbReference>
<comment type="function">
    <text evidence="2 3 4 6 8 9 10 11 13 15 16 17">Nonribosomal peptide synthetase; part of the gene cluster that mediates the biosynthesis of penicillin, the world's most important antibiotic (PubMed:1368505, PubMed:2110531, PubMed:2120195). The first step of the pathway is performed by the trimodular NRPS acvA that produces the tripeptide N-[(5S)-5-amino-5-carboxypentanoyl]-L-cysteinyl-D-valine (LLD-ACV or ACV) via condensation of the 3 residues L-2-aminoadipate, L-cysteine and L-valine (PubMed:19686863, PubMed:21889568, PubMed:9266851, PubMed:9355751). The precursor amino acids for penicillin biosynthesis are withdrawn from the vacuolar amino acid pool by the MFS-type transporter penV (PubMed:22777282, PubMed:8416970). Each of the constituent amino acids of the tripeptide acv are activated as aminoacyl-adenylates with peptide bonds formed through the participation of amino acid thioester intermediates (PubMed:21889568, PubMed:9266851). The tripeptide ACV is then cyclized to form isopenicillin N (IPN) by the isopenicillin N synthase ipnA that forms the beta-lactam nucleus (PubMed:1368505, PubMed:1369045, PubMed:1588566). Finally, the alpha-aminoadipyl side chain is exchanged for phenylacetic acid by the isopenicillin N acyltransferase aatA to yield penicillin (PubMed:1368505, PubMed:2110531, PubMed:2120195). This step occurs in the peroxisomal matrix and the penM and paaT transporters are involved in the isopenicillin N and phenylacetic acid import into the peroxisome, respectively (PubMed:23053082).</text>
</comment>
<comment type="catalytic activity">
    <reaction evidence="2 8 9">
        <text>isopenicillin N + phenylacetyl-CoA + H2O = penicillin G + L-2-aminoadipate + CoA + H(+)</text>
        <dbReference type="Rhea" id="RHEA:20720"/>
        <dbReference type="ChEBI" id="CHEBI:15377"/>
        <dbReference type="ChEBI" id="CHEBI:15378"/>
        <dbReference type="ChEBI" id="CHEBI:51354"/>
        <dbReference type="ChEBI" id="CHEBI:57287"/>
        <dbReference type="ChEBI" id="CHEBI:57390"/>
        <dbReference type="ChEBI" id="CHEBI:58399"/>
        <dbReference type="ChEBI" id="CHEBI:58672"/>
        <dbReference type="EC" id="2.3.1.164"/>
    </reaction>
    <physiologicalReaction direction="left-to-right" evidence="2 8 9">
        <dbReference type="Rhea" id="RHEA:20721"/>
    </physiologicalReaction>
</comment>
<comment type="pathway">
    <text evidence="2 8 9">Antibiotic biosynthesis; penicillin G biosynthesis; penicillin G from L-alpha-aminoadipate and L-cysteine and L-valine: step 3/3.</text>
</comment>
<comment type="subunit">
    <text evidence="8 9">The active form of the enzyme results from processing of the 40-kDa monomeric precursor to a heterodimer containing subunits of 11 and 29 kDa.</text>
</comment>
<comment type="subcellular location">
    <subcellularLocation>
        <location evidence="5">Peroxisome matrix</location>
    </subcellularLocation>
    <text evidence="5">The unprocessed preprotein is translocated inside peroxisomes and regulates its self-processing.</text>
</comment>
<comment type="induction">
    <text evidence="12">The transcription factor rfx1 controls penicillin biosynthesis through the regulation of the acvA, ipnA and aatA transcription.</text>
</comment>
<comment type="PTM">
    <text evidence="5 7 9 14">The pre-AAT protein is synthesized as 40 kDa precursor which is then self-processed into an 11 kDa (protein A) and a 29 kDa (protein B). The B protein carries AAT activity.</text>
</comment>
<comment type="similarity">
    <text evidence="20">Belongs to the peptidase C45 family.</text>
</comment>
<accession>B6HLT9</accession>
<protein>
    <recommendedName>
        <fullName evidence="19">Isopenicillin-N N-acyltransferase</fullName>
        <shortName evidence="19">IAT</shortName>
        <shortName evidence="19">IPN acyltransferase</shortName>
        <ecNumber evidence="2 8 9">2.3.1.164</ecNumber>
    </recommendedName>
    <alternativeName>
        <fullName evidence="18">Acyl-coenzyme A:6-aminopenicillanic-acid-acyltransferase 40 kDa form</fullName>
    </alternativeName>
    <alternativeName>
        <fullName evidence="18">Penicillin biosynthetis cluster protein aatA</fullName>
    </alternativeName>
    <component>
        <recommendedName>
            <fullName evidence="1">Acyl-coenzyme A:6-aminopenicillanic acid acyltransferase 11 kDa subunit</fullName>
        </recommendedName>
    </component>
    <component>
        <recommendedName>
            <fullName evidence="1">Acyl-coenzyme A:6-aminopenicillanic acid acyltransferase 29 kDa subunit</fullName>
        </recommendedName>
    </component>
</protein>
<sequence>MLHILCQGTPFEIGYEHGSAAKAVIARSIDFAVDLIRGKTKKTDEELKQVLSQLGRVIEERWPKYYEEIRGIAKGAERDVSEIVMLNTRTEFAYGLKAARDGCTTAYCQLPNGALQGQNWDFFSATKENLIRLTIRQAGLPTIKFITEAGIIGKVGFNSAGVAVNYNALHLQGLRPTGVPSHIALRIALESTSPSQAYDRIVEQGGMAASAFIMVGNGHEAFGLEFSPTSIRKQVLDANGRMVHTNHCLLQHGKNEKELDPLPDSWNRHQRMEFLLDGFDGTKQAFAQLWADEDNYPFSICRAYEEGKSRGATLFNIIYDHARREATVRLGRPTNPDEMFVMRFDEEDERSALNARL</sequence>
<reference key="1">
    <citation type="journal article" date="2008" name="Nat. Biotechnol.">
        <title>Genome sequencing and analysis of the filamentous fungus Penicillium chrysogenum.</title>
        <authorList>
            <person name="van den Berg M.A."/>
            <person name="Albang R."/>
            <person name="Albermann K."/>
            <person name="Badger J.H."/>
            <person name="Daran J.-M."/>
            <person name="Driessen A.J.M."/>
            <person name="Garcia-Estrada C."/>
            <person name="Fedorova N.D."/>
            <person name="Harris D.M."/>
            <person name="Heijne W.H.M."/>
            <person name="Joardar V.S."/>
            <person name="Kiel J.A.K.W."/>
            <person name="Kovalchuk A."/>
            <person name="Martin J.F."/>
            <person name="Nierman W.C."/>
            <person name="Nijland J.G."/>
            <person name="Pronk J.T."/>
            <person name="Roubos J.A."/>
            <person name="van der Klei I.J."/>
            <person name="van Peij N.N.M.E."/>
            <person name="Veenhuis M."/>
            <person name="von Doehren H."/>
            <person name="Wagner C."/>
            <person name="Wortman J.R."/>
            <person name="Bovenberg R.A.L."/>
        </authorList>
    </citation>
    <scope>NUCLEOTIDE SEQUENCE [LARGE SCALE GENOMIC DNA]</scope>
    <source>
        <strain>ATCC 28089 / DSM 1075 / NRRL 1951 / Wisconsin 54-1255</strain>
    </source>
</reference>
<reference key="2">
    <citation type="journal article" date="1990" name="Biotechnology (N.Y.)">
        <title>Cloning and heterologous expression of the penicillin biosynthetic gene cluster from penicillum chrysogenum.</title>
        <authorList>
            <person name="Smith D.J."/>
            <person name="Burnham M.K."/>
            <person name="Edwards J."/>
            <person name="Earl A.J."/>
            <person name="Turner G."/>
        </authorList>
    </citation>
    <scope>FUNCTION</scope>
    <scope>CATALYTIC ACTIVITY</scope>
    <scope>PATHWAY</scope>
</reference>
<reference key="3">
    <citation type="journal article" date="1990" name="FEBS Lett.">
        <title>Acyl coenzyme A: 6-aminopenicillanic acid acyltransferase from Penicillium chrysogenum and Aspergillus nidulans.</title>
        <authorList>
            <person name="Whiteman P.A."/>
            <person name="Abraham E.P."/>
            <person name="Baldwin J.E."/>
            <person name="Fleming M.D."/>
            <person name="Schofield C.J."/>
            <person name="Sutherland J.D."/>
            <person name="Willis A.C."/>
        </authorList>
    </citation>
    <scope>FUNCTION</scope>
    <scope>SUBUNIT</scope>
    <scope>CATALYTIC ACTIVITY</scope>
    <scope>PATHWAY</scope>
</reference>
<reference key="4">
    <citation type="journal article" date="1990" name="J. Bacteriol.">
        <title>Molecular characterization of the acyl-coenzyme A:isopenicillin N acyltransferase gene (penDE) from Penicillium chrysogenum and Aspergillus nidulans and activity of recombinant enzyme in Escherichia coli.</title>
        <authorList>
            <person name="Tobin M.B."/>
            <person name="Fleming M.D."/>
            <person name="Skatrud P.L."/>
            <person name="Miller J.R."/>
        </authorList>
    </citation>
    <scope>FUNCTION</scope>
    <scope>SUBUNIT</scope>
    <scope>CATALYTIC ACTIVITY</scope>
    <scope>PATHWAY</scope>
</reference>
<reference key="5">
    <citation type="journal article" date="1992" name="J. Chem. Technol. Biotechnol.">
        <title>Oxygen utilisation by isopenicillin N synthase from Penicillium chrysogenum.</title>
        <authorList>
            <person name="Bainbridge Z.A."/>
            <person name="Scott R.I."/>
            <person name="Perry D."/>
        </authorList>
    </citation>
    <scope>FUNCTION</scope>
</reference>
<reference key="6">
    <citation type="journal article" date="1992" name="J. Med. Chem.">
        <title>Substrate specificity of isopenicillin N synthase.</title>
        <authorList>
            <person name="Huffman G.W."/>
            <person name="Gesellchen P.D."/>
            <person name="Turner J.R."/>
            <person name="Rothenberger R.B."/>
            <person name="Osborne H.E."/>
            <person name="Miller F.D."/>
            <person name="Chapman J.L."/>
            <person name="Queener S.W."/>
        </authorList>
    </citation>
    <scope>FUNCTION</scope>
</reference>
<reference key="7">
    <citation type="journal article" date="1993" name="Biochem. J.">
        <title>Investigations into the post-translational modification and mechanism of isopenicillin N:acyl-CoA acyltransferase using electrospray mass spectrometry.</title>
        <authorList>
            <person name="Aplin R.T."/>
            <person name="Baldwin J.E."/>
            <person name="Roach P.L."/>
            <person name="Robinson C.V."/>
            <person name="Schofield C.J."/>
        </authorList>
    </citation>
    <scope>POST-TRANSLATIONAL CLEAVAGE</scope>
</reference>
<reference key="8">
    <citation type="journal article" date="1993" name="J. Biol. Chem.">
        <title>Subcellular compartmentation of penicillin biosynthesis in Penicillium chrysogenum. The amino acid precursors are derived from the vacuole.</title>
        <authorList>
            <person name="Lendenfeld T."/>
            <person name="Ghali D."/>
            <person name="Wolschek M."/>
            <person name="Kubicek-Pranz E.M."/>
            <person name="Kubicek C.P."/>
        </authorList>
    </citation>
    <scope>FUNCTION</scope>
</reference>
<reference key="9">
    <citation type="journal article" date="1997" name="Biochem. Biophys. Res. Commun.">
        <title>ACV synthetase: expression of amino acid activating domains of the Penicillium chrysogenum enzyme in Aspergillus nidulans.</title>
        <authorList>
            <person name="Etchegaray A."/>
            <person name="Dieckmann R."/>
            <person name="Kennedy J."/>
            <person name="Turner G."/>
            <person name="von Doehren H."/>
        </authorList>
    </citation>
    <scope>FUNCTION</scope>
</reference>
<reference key="10">
    <citation type="journal article" date="1997" name="Biochem. J.">
        <title>Purification and characterization of delta-(L-alpha-aminoadipyl)-L-cysteinyl-D-valine synthetase from Penicillium chrysogenum.</title>
        <authorList>
            <person name="Theilgaard H.B."/>
            <person name="Kristiansen K.N."/>
            <person name="Henriksen C.M."/>
            <person name="Nielsen J."/>
        </authorList>
    </citation>
    <scope>FUNCTION</scope>
</reference>
<reference key="11">
    <citation type="journal article" date="2008" name="Fungal Genet. Biol.">
        <title>The unprocessed preprotein form IATC103S of the isopenicillin N acyltransferase is transported inside peroxisomes and regulates its self-processing.</title>
        <authorList>
            <person name="Garcia-Estrada C."/>
            <person name="Vaca I."/>
            <person name="Fierro F."/>
            <person name="Sjollema K."/>
            <person name="Veenhuis M."/>
            <person name="Martin J.F."/>
        </authorList>
    </citation>
    <scope>SELF-PROCESSING</scope>
    <scope>SUBCELLULAR LOCATION</scope>
</reference>
<reference key="12">
    <citation type="journal article" date="2009" name="Metab. Eng.">
        <title>Heterologous production of non-ribosomal peptide LLD-ACV in Saccharomyces cerevisiae.</title>
        <authorList>
            <person name="Siewers V."/>
            <person name="Chen X."/>
            <person name="Huang L."/>
            <person name="Zhang J."/>
            <person name="Nielsen J."/>
        </authorList>
    </citation>
    <scope>FUNCTION</scope>
</reference>
<reference key="13">
    <citation type="journal article" date="2010" name="Structure">
        <title>Structures of an isopenicillin N converting Ntn-hydrolase reveal different catalytic roles for the active site residues of precursor and mature enzyme.</title>
        <authorList>
            <person name="Bokhove M."/>
            <person name="Yoshida H."/>
            <person name="Hensgens C.M."/>
            <person name="van der Laan J.M."/>
            <person name="Sutherland J.D."/>
            <person name="Dijkstra B.W."/>
        </authorList>
    </citation>
    <scope>SELF-PROCESSING</scope>
</reference>
<reference key="14">
    <citation type="journal article" date="2012" name="Biochimie">
        <title>Motifs in the C-terminal region of the Penicillium chrysogenum ACV synthetase are essential for valine epimerization and processivity of tripeptide formation.</title>
        <authorList>
            <person name="Wu X."/>
            <person name="Garcia-Estrada C."/>
            <person name="Vaca I."/>
            <person name="Martin J.F."/>
        </authorList>
    </citation>
    <scope>FUNCTION</scope>
</reference>
<reference key="15">
    <citation type="journal article" date="2012" name="Fungal Genet. Biol.">
        <title>The regulatory factor PcRFX1 controls the expression of the three genes of beta-lactam biosynthesis in Penicillium chrysogenum.</title>
        <authorList>
            <person name="Dominguez-Santos R."/>
            <person name="Martin J.F."/>
            <person name="Kosalkova K."/>
            <person name="Prieto C."/>
            <person name="Ullan R.V."/>
            <person name="Garcia-Estrada C."/>
        </authorList>
    </citation>
    <scope>INDUCTION</scope>
</reference>
<reference key="16">
    <citation type="journal article" date="2013" name="Appl. Microbiol. Biotechnol.">
        <title>A vacuolar membrane protein affects drastically the biosynthesis of the ACV tripeptide and the beta-lactam pathway of Penicillium chrysogenum.</title>
        <authorList>
            <person name="Fernandez-Aguado M."/>
            <person name="Teijeira F."/>
            <person name="Martin J.F."/>
            <person name="Ullan R.V."/>
        </authorList>
    </citation>
    <scope>FUNCTION</scope>
</reference>
<reference key="17">
    <citation type="journal article" date="2013" name="Appl. Microbiol. Biotechnol.">
        <title>The transport of phenylacetic acid across the peroxisomal membrane is mediated by the PaaT protein in Penicillium chrysogenum.</title>
        <authorList>
            <person name="Fernandez-Aguado M."/>
            <person name="Ullan R.V."/>
            <person name="Teijeira F."/>
            <person name="Rodriguez-Castro R."/>
            <person name="Martin J.F."/>
        </authorList>
    </citation>
    <scope>FUNCTION</scope>
</reference>
<reference key="18">
    <citation type="journal article" date="2014" name="Metab. Eng.">
        <title>New insights into the isopenicillin N transport in Penicillium chrysogenum.</title>
        <authorList>
            <person name="Fernandez-Aguado M."/>
            <person name="Martin J.F."/>
            <person name="Rodriguez-Castro R."/>
            <person name="Garcia-Estrada C."/>
            <person name="Albillos S.M."/>
            <person name="Teijeira F."/>
            <person name="Ullan R.V."/>
        </authorList>
    </citation>
    <scope>FUNCTION</scope>
</reference>
<evidence type="ECO:0000250" key="1">
    <source>
        <dbReference type="UniProtKB" id="P15802"/>
    </source>
</evidence>
<evidence type="ECO:0000269" key="2">
    <source>
    </source>
</evidence>
<evidence type="ECO:0000269" key="3">
    <source>
    </source>
</evidence>
<evidence type="ECO:0000269" key="4">
    <source>
    </source>
</evidence>
<evidence type="ECO:0000269" key="5">
    <source>
    </source>
</evidence>
<evidence type="ECO:0000269" key="6">
    <source>
    </source>
</evidence>
<evidence type="ECO:0000269" key="7">
    <source>
    </source>
</evidence>
<evidence type="ECO:0000269" key="8">
    <source>
    </source>
</evidence>
<evidence type="ECO:0000269" key="9">
    <source>
    </source>
</evidence>
<evidence type="ECO:0000269" key="10">
    <source>
    </source>
</evidence>
<evidence type="ECO:0000269" key="11">
    <source>
    </source>
</evidence>
<evidence type="ECO:0000269" key="12">
    <source>
    </source>
</evidence>
<evidence type="ECO:0000269" key="13">
    <source>
    </source>
</evidence>
<evidence type="ECO:0000269" key="14">
    <source>
    </source>
</evidence>
<evidence type="ECO:0000269" key="15">
    <source>
    </source>
</evidence>
<evidence type="ECO:0000269" key="16">
    <source>
    </source>
</evidence>
<evidence type="ECO:0000269" key="17">
    <source>
    </source>
</evidence>
<evidence type="ECO:0000303" key="18">
    <source>
    </source>
</evidence>
<evidence type="ECO:0000303" key="19">
    <source>
    </source>
</evidence>
<evidence type="ECO:0000305" key="20"/>